<organismHost>
    <name type="scientific">Mycobacterium</name>
    <dbReference type="NCBI Taxonomy" id="1763"/>
</organismHost>
<accession>Q05278</accession>
<gene>
    <name type="primary">6</name>
</gene>
<proteinExistence type="evidence at protein level"/>
<name>VG06_BPML5</name>
<keyword id="KW-0903">Direct protein sequencing</keyword>
<keyword id="KW-1185">Reference proteome</keyword>
<protein>
    <recommendedName>
        <fullName>Minor tail protein Gp6</fullName>
    </recommendedName>
</protein>
<reference key="1">
    <citation type="journal article" date="1993" name="Mol. Microbiol.">
        <title>DNA sequence, structure and gene expression of mycobacteriophage L5: a phage system for mycobacterial genetics.</title>
        <authorList>
            <person name="Hatfull G.F."/>
            <person name="Sarkis G.J."/>
        </authorList>
    </citation>
    <scope>NUCLEOTIDE SEQUENCE [GENOMIC DNA]</scope>
    <scope>PROTEIN SEQUENCE OF 2-12</scope>
</reference>
<feature type="initiator methionine" description="Removed; by host" evidence="1">
    <location>
        <position position="1"/>
    </location>
</feature>
<feature type="chain" id="PRO_0000164707" description="Minor tail protein Gp6">
    <location>
        <begin position="2"/>
        <end position="313"/>
    </location>
</feature>
<sequence length="313" mass="34021">MADLGNPLDLEMLCLVTGRDFRWTIDYPWGPGELFLELETGGEHNALHQVYVTGATGGTYTLNVNGTNTPAIDYNDVSENPQGLAGDIQDALDAAVGAGNAVVHPVSLFPAWTLNFNLNASKPLTEQLVNTINKAANDFFDTFDQLLGVDVEMTVTDTLNFKLKVTSRRSFDEVGVVTFAVDVTSQAVINFFNSVAELTGAVNTVNVDFYWNRTYDIEFTGSLGLQPIPATTADITNLAGTSKAVSVTVVEPGKKRLTIWPFTVNGETATIKVESEEADKIPNRCRWQLVHMPTGEAAGGDAKQLGRVYRQPR</sequence>
<evidence type="ECO:0000269" key="1">
    <source>
    </source>
</evidence>
<dbReference type="EMBL" id="Z18946">
    <property type="protein sequence ID" value="CAA79385.1"/>
    <property type="molecule type" value="Genomic_DNA"/>
</dbReference>
<dbReference type="PIR" id="S30954">
    <property type="entry name" value="S30954"/>
</dbReference>
<dbReference type="RefSeq" id="NP_039673.1">
    <property type="nucleotide sequence ID" value="NC_001335.1"/>
</dbReference>
<dbReference type="GeneID" id="2942962"/>
<dbReference type="KEGG" id="vg:2942962"/>
<dbReference type="OrthoDB" id="5601at10239"/>
<dbReference type="Proteomes" id="UP000002123">
    <property type="component" value="Genome"/>
</dbReference>
<dbReference type="InterPro" id="IPR055688">
    <property type="entry name" value="LtfC/p132/Gp6_b-sand"/>
</dbReference>
<dbReference type="Pfam" id="PF23926">
    <property type="entry name" value="LtfC"/>
    <property type="match status" value="1"/>
</dbReference>
<organism>
    <name type="scientific">Mycobacterium phage L5</name>
    <name type="common">Mycobacteriophage L5</name>
    <dbReference type="NCBI Taxonomy" id="31757"/>
    <lineage>
        <taxon>Viruses</taxon>
        <taxon>Duplodnaviria</taxon>
        <taxon>Heunggongvirae</taxon>
        <taxon>Uroviricota</taxon>
        <taxon>Caudoviricetes</taxon>
        <taxon>Fromanvirus</taxon>
    </lineage>
</organism>